<reference key="1">
    <citation type="journal article" date="2003" name="Nature">
        <title>The DNA sequence and analysis of human chromosome 6.</title>
        <authorList>
            <person name="Mungall A.J."/>
            <person name="Palmer S.A."/>
            <person name="Sims S.K."/>
            <person name="Edwards C.A."/>
            <person name="Ashurst J.L."/>
            <person name="Wilming L."/>
            <person name="Jones M.C."/>
            <person name="Horton R."/>
            <person name="Hunt S.E."/>
            <person name="Scott C.E."/>
            <person name="Gilbert J.G.R."/>
            <person name="Clamp M.E."/>
            <person name="Bethel G."/>
            <person name="Milne S."/>
            <person name="Ainscough R."/>
            <person name="Almeida J.P."/>
            <person name="Ambrose K.D."/>
            <person name="Andrews T.D."/>
            <person name="Ashwell R.I.S."/>
            <person name="Babbage A.K."/>
            <person name="Bagguley C.L."/>
            <person name="Bailey J."/>
            <person name="Banerjee R."/>
            <person name="Barker D.J."/>
            <person name="Barlow K.F."/>
            <person name="Bates K."/>
            <person name="Beare D.M."/>
            <person name="Beasley H."/>
            <person name="Beasley O."/>
            <person name="Bird C.P."/>
            <person name="Blakey S.E."/>
            <person name="Bray-Allen S."/>
            <person name="Brook J."/>
            <person name="Brown A.J."/>
            <person name="Brown J.Y."/>
            <person name="Burford D.C."/>
            <person name="Burrill W."/>
            <person name="Burton J."/>
            <person name="Carder C."/>
            <person name="Carter N.P."/>
            <person name="Chapman J.C."/>
            <person name="Clark S.Y."/>
            <person name="Clark G."/>
            <person name="Clee C.M."/>
            <person name="Clegg S."/>
            <person name="Cobley V."/>
            <person name="Collier R.E."/>
            <person name="Collins J.E."/>
            <person name="Colman L.K."/>
            <person name="Corby N.R."/>
            <person name="Coville G.J."/>
            <person name="Culley K.M."/>
            <person name="Dhami P."/>
            <person name="Davies J."/>
            <person name="Dunn M."/>
            <person name="Earthrowl M.E."/>
            <person name="Ellington A.E."/>
            <person name="Evans K.A."/>
            <person name="Faulkner L."/>
            <person name="Francis M.D."/>
            <person name="Frankish A."/>
            <person name="Frankland J."/>
            <person name="French L."/>
            <person name="Garner P."/>
            <person name="Garnett J."/>
            <person name="Ghori M.J."/>
            <person name="Gilby L.M."/>
            <person name="Gillson C.J."/>
            <person name="Glithero R.J."/>
            <person name="Grafham D.V."/>
            <person name="Grant M."/>
            <person name="Gribble S."/>
            <person name="Griffiths C."/>
            <person name="Griffiths M.N.D."/>
            <person name="Hall R."/>
            <person name="Halls K.S."/>
            <person name="Hammond S."/>
            <person name="Harley J.L."/>
            <person name="Hart E.A."/>
            <person name="Heath P.D."/>
            <person name="Heathcott R."/>
            <person name="Holmes S.J."/>
            <person name="Howden P.J."/>
            <person name="Howe K.L."/>
            <person name="Howell G.R."/>
            <person name="Huckle E."/>
            <person name="Humphray S.J."/>
            <person name="Humphries M.D."/>
            <person name="Hunt A.R."/>
            <person name="Johnson C.M."/>
            <person name="Joy A.A."/>
            <person name="Kay M."/>
            <person name="Keenan S.J."/>
            <person name="Kimberley A.M."/>
            <person name="King A."/>
            <person name="Laird G.K."/>
            <person name="Langford C."/>
            <person name="Lawlor S."/>
            <person name="Leongamornlert D.A."/>
            <person name="Leversha M."/>
            <person name="Lloyd C.R."/>
            <person name="Lloyd D.M."/>
            <person name="Loveland J.E."/>
            <person name="Lovell J."/>
            <person name="Martin S."/>
            <person name="Mashreghi-Mohammadi M."/>
            <person name="Maslen G.L."/>
            <person name="Matthews L."/>
            <person name="McCann O.T."/>
            <person name="McLaren S.J."/>
            <person name="McLay K."/>
            <person name="McMurray A."/>
            <person name="Moore M.J.F."/>
            <person name="Mullikin J.C."/>
            <person name="Niblett D."/>
            <person name="Nickerson T."/>
            <person name="Novik K.L."/>
            <person name="Oliver K."/>
            <person name="Overton-Larty E.K."/>
            <person name="Parker A."/>
            <person name="Patel R."/>
            <person name="Pearce A.V."/>
            <person name="Peck A.I."/>
            <person name="Phillimore B.J.C.T."/>
            <person name="Phillips S."/>
            <person name="Plumb R.W."/>
            <person name="Porter K.M."/>
            <person name="Ramsey Y."/>
            <person name="Ranby S.A."/>
            <person name="Rice C.M."/>
            <person name="Ross M.T."/>
            <person name="Searle S.M."/>
            <person name="Sehra H.K."/>
            <person name="Sheridan E."/>
            <person name="Skuce C.D."/>
            <person name="Smith S."/>
            <person name="Smith M."/>
            <person name="Spraggon L."/>
            <person name="Squares S.L."/>
            <person name="Steward C.A."/>
            <person name="Sycamore N."/>
            <person name="Tamlyn-Hall G."/>
            <person name="Tester J."/>
            <person name="Theaker A.J."/>
            <person name="Thomas D.W."/>
            <person name="Thorpe A."/>
            <person name="Tracey A."/>
            <person name="Tromans A."/>
            <person name="Tubby B."/>
            <person name="Wall M."/>
            <person name="Wallis J.M."/>
            <person name="West A.P."/>
            <person name="White S.S."/>
            <person name="Whitehead S.L."/>
            <person name="Whittaker H."/>
            <person name="Wild A."/>
            <person name="Willey D.J."/>
            <person name="Wilmer T.E."/>
            <person name="Wood J.M."/>
            <person name="Wray P.W."/>
            <person name="Wyatt J.C."/>
            <person name="Young L."/>
            <person name="Younger R.M."/>
            <person name="Bentley D.R."/>
            <person name="Coulson A."/>
            <person name="Durbin R.M."/>
            <person name="Hubbard T."/>
            <person name="Sulston J.E."/>
            <person name="Dunham I."/>
            <person name="Rogers J."/>
            <person name="Beck S."/>
        </authorList>
    </citation>
    <scope>NUCLEOTIDE SEQUENCE [LARGE SCALE GENOMIC DNA]</scope>
    <scope>VARIANT GLN-511</scope>
</reference>
<reference key="2">
    <citation type="journal article" date="2004" name="Genome Res.">
        <title>The status, quality, and expansion of the NIH full-length cDNA project: the Mammalian Gene Collection (MGC).</title>
        <authorList>
            <consortium name="The MGC Project Team"/>
        </authorList>
    </citation>
    <scope>NUCLEOTIDE SEQUENCE [LARGE SCALE MRNA]</scope>
    <source>
        <tissue>Brain</tissue>
    </source>
</reference>
<reference key="3">
    <citation type="journal article" date="1998" name="DNA Seq.">
        <title>Computer sequence analysis of human highly conserved zinc finger modules.</title>
        <authorList>
            <person name="Petroni D."/>
            <person name="Bartolini E."/>
            <person name="Chiaramonte R."/>
            <person name="Ottolenghi S."/>
            <person name="Comi P."/>
        </authorList>
    </citation>
    <scope>NUCLEOTIDE SEQUENCE [MRNA] OF 328-547</scope>
</reference>
<name>ZN311_HUMAN</name>
<protein>
    <recommendedName>
        <fullName>Zinc finger protein 311</fullName>
    </recommendedName>
    <alternativeName>
        <fullName>Zinc finger protein zfp-31</fullName>
    </alternativeName>
</protein>
<gene>
    <name type="primary">ZNF311</name>
    <name type="synonym">ZFP31</name>
</gene>
<comment type="function">
    <text>May be involved in transcriptional regulation.</text>
</comment>
<comment type="subcellular location">
    <subcellularLocation>
        <location evidence="4">Nucleus</location>
    </subcellularLocation>
</comment>
<comment type="similarity">
    <text evidence="4">Belongs to the krueppel C2H2-type zinc-finger protein family.</text>
</comment>
<comment type="sequence caution" evidence="4">
    <conflict type="frameshift">
        <sequence resource="EMBL-CDS" id="AAB16812"/>
    </conflict>
</comment>
<evidence type="ECO:0000255" key="1">
    <source>
        <dbReference type="PROSITE-ProRule" id="PRU00042"/>
    </source>
</evidence>
<evidence type="ECO:0000255" key="2">
    <source>
        <dbReference type="PROSITE-ProRule" id="PRU00119"/>
    </source>
</evidence>
<evidence type="ECO:0000269" key="3">
    <source>
    </source>
</evidence>
<evidence type="ECO:0000305" key="4"/>
<organism>
    <name type="scientific">Homo sapiens</name>
    <name type="common">Human</name>
    <dbReference type="NCBI Taxonomy" id="9606"/>
    <lineage>
        <taxon>Eukaryota</taxon>
        <taxon>Metazoa</taxon>
        <taxon>Chordata</taxon>
        <taxon>Craniata</taxon>
        <taxon>Vertebrata</taxon>
        <taxon>Euteleostomi</taxon>
        <taxon>Mammalia</taxon>
        <taxon>Eutheria</taxon>
        <taxon>Euarchontoglires</taxon>
        <taxon>Primates</taxon>
        <taxon>Haplorrhini</taxon>
        <taxon>Catarrhini</taxon>
        <taxon>Hominidae</taxon>
        <taxon>Homo</taxon>
    </lineage>
</organism>
<keyword id="KW-0238">DNA-binding</keyword>
<keyword id="KW-0479">Metal-binding</keyword>
<keyword id="KW-0539">Nucleus</keyword>
<keyword id="KW-1267">Proteomics identification</keyword>
<keyword id="KW-1185">Reference proteome</keyword>
<keyword id="KW-0677">Repeat</keyword>
<keyword id="KW-0804">Transcription</keyword>
<keyword id="KW-0805">Transcription regulation</keyword>
<keyword id="KW-0862">Zinc</keyword>
<keyword id="KW-0863">Zinc-finger</keyword>
<feature type="chain" id="PRO_0000280404" description="Zinc finger protein 311">
    <location>
        <begin position="1"/>
        <end position="666"/>
    </location>
</feature>
<feature type="domain" description="KRAB" evidence="2">
    <location>
        <begin position="64"/>
        <end position="135"/>
    </location>
</feature>
<feature type="zinc finger region" description="C2H2-type 1" evidence="1">
    <location>
        <begin position="247"/>
        <end position="269"/>
    </location>
</feature>
<feature type="zinc finger region" description="C2H2-type 2" evidence="1">
    <location>
        <begin position="275"/>
        <end position="297"/>
    </location>
</feature>
<feature type="zinc finger region" description="C2H2-type 3" evidence="1">
    <location>
        <begin position="303"/>
        <end position="325"/>
    </location>
</feature>
<feature type="zinc finger region" description="C2H2-type 4" evidence="1">
    <location>
        <begin position="331"/>
        <end position="353"/>
    </location>
</feature>
<feature type="zinc finger region" description="C2H2-type 5" evidence="1">
    <location>
        <begin position="359"/>
        <end position="381"/>
    </location>
</feature>
<feature type="zinc finger region" description="C2H2-type 6" evidence="1">
    <location>
        <begin position="387"/>
        <end position="409"/>
    </location>
</feature>
<feature type="zinc finger region" description="C2H2-type 7" evidence="1">
    <location>
        <begin position="415"/>
        <end position="437"/>
    </location>
</feature>
<feature type="zinc finger region" description="C2H2-type 8" evidence="1">
    <location>
        <begin position="443"/>
        <end position="465"/>
    </location>
</feature>
<feature type="zinc finger region" description="C2H2-type 9" evidence="1">
    <location>
        <begin position="471"/>
        <end position="493"/>
    </location>
</feature>
<feature type="zinc finger region" description="C2H2-type 10" evidence="1">
    <location>
        <begin position="499"/>
        <end position="521"/>
    </location>
</feature>
<feature type="zinc finger region" description="C2H2-type 11" evidence="1">
    <location>
        <begin position="527"/>
        <end position="549"/>
    </location>
</feature>
<feature type="zinc finger region" description="C2H2-type 12" evidence="1">
    <location>
        <begin position="555"/>
        <end position="577"/>
    </location>
</feature>
<feature type="zinc finger region" description="C2H2-type 13" evidence="1">
    <location>
        <begin position="583"/>
        <end position="605"/>
    </location>
</feature>
<feature type="zinc finger region" description="C2H2-type 14" evidence="1">
    <location>
        <begin position="611"/>
        <end position="634"/>
    </location>
</feature>
<feature type="sequence variant" id="VAR_031136" description="In dbSNP:rs9295783.">
    <original>R</original>
    <variation>C</variation>
    <location>
        <position position="486"/>
    </location>
</feature>
<feature type="sequence variant" id="VAR_031137" description="In dbSNP:rs6456880." evidence="3">
    <original>K</original>
    <variation>Q</variation>
    <location>
        <position position="511"/>
    </location>
</feature>
<accession>Q5JNZ3</accession>
<accession>A2BFK5</accession>
<accession>B0S7Y4</accession>
<accession>Q92971</accession>
<proteinExistence type="evidence at protein level"/>
<dbReference type="EMBL" id="AL662791">
    <property type="status" value="NOT_ANNOTATED_CDS"/>
    <property type="molecule type" value="Genomic_DNA"/>
</dbReference>
<dbReference type="EMBL" id="AL662865">
    <property type="status" value="NOT_ANNOTATED_CDS"/>
    <property type="molecule type" value="Genomic_DNA"/>
</dbReference>
<dbReference type="EMBL" id="AL929561">
    <property type="status" value="NOT_ANNOTATED_CDS"/>
    <property type="molecule type" value="Genomic_DNA"/>
</dbReference>
<dbReference type="EMBL" id="BX293545">
    <property type="status" value="NOT_ANNOTATED_CDS"/>
    <property type="molecule type" value="Genomic_DNA"/>
</dbReference>
<dbReference type="EMBL" id="CR759957">
    <property type="status" value="NOT_ANNOTATED_CDS"/>
    <property type="molecule type" value="Genomic_DNA"/>
</dbReference>
<dbReference type="EMBL" id="BX927167">
    <property type="status" value="NOT_ANNOTATED_CDS"/>
    <property type="molecule type" value="Genomic_DNA"/>
</dbReference>
<dbReference type="EMBL" id="CR759835">
    <property type="status" value="NOT_ANNOTATED_CDS"/>
    <property type="molecule type" value="Genomic_DNA"/>
</dbReference>
<dbReference type="EMBL" id="BC136745">
    <property type="protein sequence ID" value="AAI36746.1"/>
    <property type="molecule type" value="mRNA"/>
</dbReference>
<dbReference type="EMBL" id="U71600">
    <property type="protein sequence ID" value="AAB16812.1"/>
    <property type="status" value="ALT_FRAME"/>
    <property type="molecule type" value="mRNA"/>
</dbReference>
<dbReference type="CCDS" id="CCDS34357.1"/>
<dbReference type="RefSeq" id="NP_001010877.2">
    <property type="nucleotide sequence ID" value="NM_001010877.5"/>
</dbReference>
<dbReference type="RefSeq" id="NP_001305463.1">
    <property type="nucleotide sequence ID" value="NM_001318534.1"/>
</dbReference>
<dbReference type="RefSeq" id="NP_001369289.1">
    <property type="nucleotide sequence ID" value="NM_001382360.1"/>
</dbReference>
<dbReference type="RefSeq" id="XP_016866247.1">
    <property type="nucleotide sequence ID" value="XM_017010758.3"/>
</dbReference>
<dbReference type="RefSeq" id="XP_016866248.1">
    <property type="nucleotide sequence ID" value="XM_017010759.1"/>
</dbReference>
<dbReference type="RefSeq" id="XP_047274626.1">
    <property type="nucleotide sequence ID" value="XM_047418670.1"/>
</dbReference>
<dbReference type="RefSeq" id="XP_047274627.1">
    <property type="nucleotide sequence ID" value="XM_047418671.1"/>
</dbReference>
<dbReference type="RefSeq" id="XP_054184464.1">
    <property type="nucleotide sequence ID" value="XM_054328489.1"/>
</dbReference>
<dbReference type="RefSeq" id="XP_054184465.1">
    <property type="nucleotide sequence ID" value="XM_054328490.1"/>
</dbReference>
<dbReference type="RefSeq" id="XP_054184466.1">
    <property type="nucleotide sequence ID" value="XM_054328491.1"/>
</dbReference>
<dbReference type="RefSeq" id="XP_054185768.1">
    <property type="nucleotide sequence ID" value="XM_054329793.1"/>
</dbReference>
<dbReference type="RefSeq" id="XP_054185769.1">
    <property type="nucleotide sequence ID" value="XM_054329794.1"/>
</dbReference>
<dbReference type="RefSeq" id="XP_054185770.1">
    <property type="nucleotide sequence ID" value="XM_054329795.1"/>
</dbReference>
<dbReference type="RefSeq" id="XP_054186256.1">
    <property type="nucleotide sequence ID" value="XM_054330281.1"/>
</dbReference>
<dbReference type="RefSeq" id="XP_054186257.1">
    <property type="nucleotide sequence ID" value="XM_054330282.1"/>
</dbReference>
<dbReference type="RefSeq" id="XP_054186258.1">
    <property type="nucleotide sequence ID" value="XM_054330283.1"/>
</dbReference>
<dbReference type="RefSeq" id="XP_054186548.1">
    <property type="nucleotide sequence ID" value="XM_054330573.1"/>
</dbReference>
<dbReference type="RefSeq" id="XP_054186549.1">
    <property type="nucleotide sequence ID" value="XM_054330574.1"/>
</dbReference>
<dbReference type="RefSeq" id="XP_054187024.1">
    <property type="nucleotide sequence ID" value="XM_054331049.1"/>
</dbReference>
<dbReference type="RefSeq" id="XP_054187025.1">
    <property type="nucleotide sequence ID" value="XM_054331050.1"/>
</dbReference>
<dbReference type="SMR" id="Q5JNZ3"/>
<dbReference type="BioGRID" id="129424">
    <property type="interactions" value="10"/>
</dbReference>
<dbReference type="FunCoup" id="Q5JNZ3">
    <property type="interactions" value="3"/>
</dbReference>
<dbReference type="IntAct" id="Q5JNZ3">
    <property type="interactions" value="7"/>
</dbReference>
<dbReference type="STRING" id="9606.ENSP00000366384"/>
<dbReference type="iPTMnet" id="Q5JNZ3"/>
<dbReference type="PhosphoSitePlus" id="Q5JNZ3"/>
<dbReference type="BioMuta" id="ZNF311"/>
<dbReference type="DMDM" id="143758539"/>
<dbReference type="jPOST" id="Q5JNZ3"/>
<dbReference type="MassIVE" id="Q5JNZ3"/>
<dbReference type="PaxDb" id="9606-ENSP00000366384"/>
<dbReference type="PeptideAtlas" id="Q5JNZ3"/>
<dbReference type="ProteomicsDB" id="62993"/>
<dbReference type="Antibodypedia" id="54802">
    <property type="antibodies" value="27 antibodies from 12 providers"/>
</dbReference>
<dbReference type="DNASU" id="282890"/>
<dbReference type="Ensembl" id="ENST00000377179.4">
    <property type="protein sequence ID" value="ENSP00000366384.3"/>
    <property type="gene ID" value="ENSG00000197935.7"/>
</dbReference>
<dbReference type="Ensembl" id="ENST00000383655.4">
    <property type="protein sequence ID" value="ENSP00000373151.4"/>
    <property type="gene ID" value="ENSG00000169260.11"/>
</dbReference>
<dbReference type="Ensembl" id="ENST00000426120.2">
    <property type="protein sequence ID" value="ENSP00000398983.2"/>
    <property type="gene ID" value="ENSG00000225351.4"/>
</dbReference>
<dbReference type="Ensembl" id="ENST00000429714.2">
    <property type="protein sequence ID" value="ENSP00000399157.2"/>
    <property type="gene ID" value="ENSG00000235178.4"/>
</dbReference>
<dbReference type="Ensembl" id="ENST00000436574.2">
    <property type="protein sequence ID" value="ENSP00000405154.2"/>
    <property type="gene ID" value="ENSG00000235589.4"/>
</dbReference>
<dbReference type="Ensembl" id="ENST00000452316.2">
    <property type="protein sequence ID" value="ENSP00000415772.2"/>
    <property type="gene ID" value="ENSG00000223687.4"/>
</dbReference>
<dbReference type="Ensembl" id="ENST00000458265.2">
    <property type="protein sequence ID" value="ENSP00000398440.2"/>
    <property type="gene ID" value="ENSG00000233831.4"/>
</dbReference>
<dbReference type="GeneID" id="282890"/>
<dbReference type="KEGG" id="hsa:282890"/>
<dbReference type="MANE-Select" id="ENST00000377179.4">
    <property type="protein sequence ID" value="ENSP00000366384.3"/>
    <property type="RefSeq nucleotide sequence ID" value="NM_001382360.1"/>
    <property type="RefSeq protein sequence ID" value="NP_001369289.1"/>
</dbReference>
<dbReference type="UCSC" id="uc003nlu.3">
    <property type="organism name" value="human"/>
</dbReference>
<dbReference type="AGR" id="HGNC:13847"/>
<dbReference type="CTD" id="282890"/>
<dbReference type="DisGeNET" id="282890"/>
<dbReference type="GeneCards" id="ZNF311"/>
<dbReference type="HGNC" id="HGNC:13847">
    <property type="gene designation" value="ZNF311"/>
</dbReference>
<dbReference type="HPA" id="ENSG00000197935">
    <property type="expression patterns" value="Tissue enhanced (testis)"/>
</dbReference>
<dbReference type="neXtProt" id="NX_Q5JNZ3"/>
<dbReference type="OpenTargets" id="ENSG00000197935"/>
<dbReference type="PharmGKB" id="PA134865305"/>
<dbReference type="VEuPathDB" id="HostDB:ENSG00000197935"/>
<dbReference type="eggNOG" id="KOG1721">
    <property type="taxonomic scope" value="Eukaryota"/>
</dbReference>
<dbReference type="GeneTree" id="ENSGT00940000163512"/>
<dbReference type="HOGENOM" id="CLU_002678_44_5_1"/>
<dbReference type="InParanoid" id="Q5JNZ3"/>
<dbReference type="OMA" id="EPCVQDP"/>
<dbReference type="OrthoDB" id="9543553at2759"/>
<dbReference type="PAN-GO" id="Q5JNZ3">
    <property type="GO annotations" value="4 GO annotations based on evolutionary models"/>
</dbReference>
<dbReference type="PhylomeDB" id="Q5JNZ3"/>
<dbReference type="TreeFam" id="TF341635"/>
<dbReference type="PathwayCommons" id="Q5JNZ3"/>
<dbReference type="Reactome" id="R-HSA-212436">
    <property type="pathway name" value="Generic Transcription Pathway"/>
</dbReference>
<dbReference type="SignaLink" id="Q5JNZ3"/>
<dbReference type="BioGRID-ORCS" id="282890">
    <property type="hits" value="13 hits in 1176 CRISPR screens"/>
</dbReference>
<dbReference type="GenomeRNAi" id="282890"/>
<dbReference type="Pharos" id="Q5JNZ3">
    <property type="development level" value="Tdark"/>
</dbReference>
<dbReference type="PRO" id="PR:Q5JNZ3"/>
<dbReference type="Proteomes" id="UP000005640">
    <property type="component" value="Chromosome 6"/>
</dbReference>
<dbReference type="RNAct" id="Q5JNZ3">
    <property type="molecule type" value="protein"/>
</dbReference>
<dbReference type="Bgee" id="ENSG00000197935">
    <property type="expression patterns" value="Expressed in primordial germ cell in gonad and 97 other cell types or tissues"/>
</dbReference>
<dbReference type="ExpressionAtlas" id="Q5JNZ3">
    <property type="expression patterns" value="baseline and differential"/>
</dbReference>
<dbReference type="GO" id="GO:0005634">
    <property type="term" value="C:nucleus"/>
    <property type="evidence" value="ECO:0000318"/>
    <property type="project" value="GO_Central"/>
</dbReference>
<dbReference type="GO" id="GO:0000981">
    <property type="term" value="F:DNA-binding transcription factor activity, RNA polymerase II-specific"/>
    <property type="evidence" value="ECO:0000318"/>
    <property type="project" value="GO_Central"/>
</dbReference>
<dbReference type="GO" id="GO:0000978">
    <property type="term" value="F:RNA polymerase II cis-regulatory region sequence-specific DNA binding"/>
    <property type="evidence" value="ECO:0000318"/>
    <property type="project" value="GO_Central"/>
</dbReference>
<dbReference type="GO" id="GO:0008270">
    <property type="term" value="F:zinc ion binding"/>
    <property type="evidence" value="ECO:0007669"/>
    <property type="project" value="UniProtKB-KW"/>
</dbReference>
<dbReference type="GO" id="GO:0006357">
    <property type="term" value="P:regulation of transcription by RNA polymerase II"/>
    <property type="evidence" value="ECO:0000318"/>
    <property type="project" value="GO_Central"/>
</dbReference>
<dbReference type="CDD" id="cd07765">
    <property type="entry name" value="KRAB_A-box"/>
    <property type="match status" value="1"/>
</dbReference>
<dbReference type="FunFam" id="3.30.160.60:FF:000478">
    <property type="entry name" value="Zinc finger protein 133"/>
    <property type="match status" value="1"/>
</dbReference>
<dbReference type="FunFam" id="3.30.160.60:FF:000295">
    <property type="entry name" value="zinc finger protein 19"/>
    <property type="match status" value="1"/>
</dbReference>
<dbReference type="FunFam" id="3.30.160.60:FF:001181">
    <property type="entry name" value="Zinc finger protein 311"/>
    <property type="match status" value="1"/>
</dbReference>
<dbReference type="FunFam" id="3.30.160.60:FF:002471">
    <property type="entry name" value="Zinc finger protein 311"/>
    <property type="match status" value="1"/>
</dbReference>
<dbReference type="FunFam" id="3.30.160.60:FF:002343">
    <property type="entry name" value="Zinc finger protein 33A"/>
    <property type="match status" value="2"/>
</dbReference>
<dbReference type="FunFam" id="3.30.160.60:FF:000016">
    <property type="entry name" value="zinc finger protein 37 homolog"/>
    <property type="match status" value="1"/>
</dbReference>
<dbReference type="FunFam" id="3.30.160.60:FF:000187">
    <property type="entry name" value="zinc finger protein 37 homolog"/>
    <property type="match status" value="1"/>
</dbReference>
<dbReference type="FunFam" id="3.30.160.60:FF:000737">
    <property type="entry name" value="Zinc finger protein 565"/>
    <property type="match status" value="1"/>
</dbReference>
<dbReference type="FunFam" id="3.30.160.60:FF:000862">
    <property type="entry name" value="zinc finger protein 697"/>
    <property type="match status" value="1"/>
</dbReference>
<dbReference type="FunFam" id="3.30.160.60:FF:001027">
    <property type="entry name" value="Zinc finger protein 7"/>
    <property type="match status" value="2"/>
</dbReference>
<dbReference type="FunFam" id="3.30.160.60:FF:000176">
    <property type="entry name" value="zinc finger protein 70"/>
    <property type="match status" value="1"/>
</dbReference>
<dbReference type="FunFam" id="3.30.160.60:FF:002196">
    <property type="entry name" value="zinc finger protein 850-like isoform X3"/>
    <property type="match status" value="1"/>
</dbReference>
<dbReference type="Gene3D" id="6.10.140.140">
    <property type="match status" value="1"/>
</dbReference>
<dbReference type="Gene3D" id="3.30.160.60">
    <property type="entry name" value="Classic Zinc Finger"/>
    <property type="match status" value="14"/>
</dbReference>
<dbReference type="InterPro" id="IPR001909">
    <property type="entry name" value="KRAB"/>
</dbReference>
<dbReference type="InterPro" id="IPR036051">
    <property type="entry name" value="KRAB_dom_sf"/>
</dbReference>
<dbReference type="InterPro" id="IPR050826">
    <property type="entry name" value="Krueppel_C2H2_ZnFinger"/>
</dbReference>
<dbReference type="InterPro" id="IPR036236">
    <property type="entry name" value="Znf_C2H2_sf"/>
</dbReference>
<dbReference type="InterPro" id="IPR013087">
    <property type="entry name" value="Znf_C2H2_type"/>
</dbReference>
<dbReference type="PANTHER" id="PTHR24377">
    <property type="entry name" value="IP01015P-RELATED"/>
    <property type="match status" value="1"/>
</dbReference>
<dbReference type="Pfam" id="PF01352">
    <property type="entry name" value="KRAB"/>
    <property type="match status" value="1"/>
</dbReference>
<dbReference type="Pfam" id="PF00096">
    <property type="entry name" value="zf-C2H2"/>
    <property type="match status" value="9"/>
</dbReference>
<dbReference type="Pfam" id="PF13912">
    <property type="entry name" value="zf-C2H2_6"/>
    <property type="match status" value="1"/>
</dbReference>
<dbReference type="SMART" id="SM00349">
    <property type="entry name" value="KRAB"/>
    <property type="match status" value="1"/>
</dbReference>
<dbReference type="SMART" id="SM00355">
    <property type="entry name" value="ZnF_C2H2"/>
    <property type="match status" value="14"/>
</dbReference>
<dbReference type="SUPFAM" id="SSF57667">
    <property type="entry name" value="beta-beta-alpha zinc fingers"/>
    <property type="match status" value="8"/>
</dbReference>
<dbReference type="SUPFAM" id="SSF109640">
    <property type="entry name" value="KRAB domain (Kruppel-associated box)"/>
    <property type="match status" value="1"/>
</dbReference>
<dbReference type="PROSITE" id="PS50805">
    <property type="entry name" value="KRAB"/>
    <property type="match status" value="1"/>
</dbReference>
<dbReference type="PROSITE" id="PS00028">
    <property type="entry name" value="ZINC_FINGER_C2H2_1"/>
    <property type="match status" value="14"/>
</dbReference>
<dbReference type="PROSITE" id="PS50157">
    <property type="entry name" value="ZINC_FINGER_C2H2_2"/>
    <property type="match status" value="14"/>
</dbReference>
<sequence length="666" mass="76322">MQEVVLLDESSGPPSQLLWTRQDTQLPQESALLPAPYPAFTKDGSQGNLPQADITLMSQAQESVTFEDVAVNFTNREWQCLTYAQRHLYKDVMLENYGNMVSLGFPFPKPPLISHLEREVDPCVQDPQDRESLSCSYPVSADKMWPENEKASSQQEIFENGEAYWMKFNSLLKVDSRDPKVREVCVQDVKLENQWETSIREKLREEKEGSEEVTCKKGKNQKVLSKNLNPNSKHSQCNKVLIAQKLHECARCGKNFSWHSDLILHEQIHSGEKPHVCNECGKAFKTRNQLSMHRIIHTGEKPFNCTQCGKAFNSRSALCRHKKTHSGEKPHECRDCGKAFKTRNRLCMHQLIHTGEKPYKCNCCGKAFQFKHSLTIHGRIHTGEKPYECEECGKAFSGSSDLTKHIRIHTGERPYECSKCGRAFSRSSDLSKHKRIHTREKHYGCPQCGKDFSIKAELTKHRRIHTEEKRYRCEECGKAFRHNCKRRAHEREHTGEKPYQCRDCGKTFQDKHCLTIHQRIHTGEKPYKCLECGKAFSGKSNLTNHRRIHTGEKPHKCEVCGMAFHHSSVLRQHKRIHTGEKPYTCSECGTSFRQGSALIGHKRVHTGEKPYECEECGKAFRVSSNLTGHKKRKHQVWSTHELDGSRKSLSPVTVSQTSVVSILTSA</sequence>